<comment type="function">
    <text evidence="1">The beta subunit is responsible for the synthesis of L-tryptophan from indole and L-serine.</text>
</comment>
<comment type="catalytic activity">
    <reaction evidence="1">
        <text>(1S,2R)-1-C-(indol-3-yl)glycerol 3-phosphate + L-serine = D-glyceraldehyde 3-phosphate + L-tryptophan + H2O</text>
        <dbReference type="Rhea" id="RHEA:10532"/>
        <dbReference type="ChEBI" id="CHEBI:15377"/>
        <dbReference type="ChEBI" id="CHEBI:33384"/>
        <dbReference type="ChEBI" id="CHEBI:57912"/>
        <dbReference type="ChEBI" id="CHEBI:58866"/>
        <dbReference type="ChEBI" id="CHEBI:59776"/>
        <dbReference type="EC" id="4.2.1.20"/>
    </reaction>
</comment>
<comment type="cofactor">
    <cofactor evidence="1">
        <name>pyridoxal 5'-phosphate</name>
        <dbReference type="ChEBI" id="CHEBI:597326"/>
    </cofactor>
</comment>
<comment type="pathway">
    <text evidence="1">Amino-acid biosynthesis; L-tryptophan biosynthesis; L-tryptophan from chorismate: step 5/5.</text>
</comment>
<comment type="subunit">
    <text evidence="1">Tetramer of two alpha and two beta chains.</text>
</comment>
<comment type="similarity">
    <text evidence="1">Belongs to the TrpB family.</text>
</comment>
<dbReference type="EC" id="4.2.1.20" evidence="1"/>
<dbReference type="EMBL" id="CP000936">
    <property type="protein sequence ID" value="ACA36208.1"/>
    <property type="molecule type" value="Genomic_DNA"/>
</dbReference>
<dbReference type="RefSeq" id="WP_000331298.1">
    <property type="nucleotide sequence ID" value="NC_010380.1"/>
</dbReference>
<dbReference type="SMR" id="B1I7S7"/>
<dbReference type="KEGG" id="spv:SPH_1934"/>
<dbReference type="HOGENOM" id="CLU_016734_3_1_9"/>
<dbReference type="UniPathway" id="UPA00035">
    <property type="reaction ID" value="UER00044"/>
</dbReference>
<dbReference type="Proteomes" id="UP000002163">
    <property type="component" value="Chromosome"/>
</dbReference>
<dbReference type="GO" id="GO:0005737">
    <property type="term" value="C:cytoplasm"/>
    <property type="evidence" value="ECO:0007669"/>
    <property type="project" value="TreeGrafter"/>
</dbReference>
<dbReference type="GO" id="GO:0004834">
    <property type="term" value="F:tryptophan synthase activity"/>
    <property type="evidence" value="ECO:0007669"/>
    <property type="project" value="UniProtKB-UniRule"/>
</dbReference>
<dbReference type="CDD" id="cd06446">
    <property type="entry name" value="Trp-synth_B"/>
    <property type="match status" value="1"/>
</dbReference>
<dbReference type="FunFam" id="3.40.50.1100:FF:000001">
    <property type="entry name" value="Tryptophan synthase beta chain"/>
    <property type="match status" value="1"/>
</dbReference>
<dbReference type="FunFam" id="3.40.50.1100:FF:000004">
    <property type="entry name" value="Tryptophan synthase beta chain"/>
    <property type="match status" value="1"/>
</dbReference>
<dbReference type="Gene3D" id="3.40.50.1100">
    <property type="match status" value="2"/>
</dbReference>
<dbReference type="HAMAP" id="MF_00133">
    <property type="entry name" value="Trp_synth_beta"/>
    <property type="match status" value="1"/>
</dbReference>
<dbReference type="InterPro" id="IPR006653">
    <property type="entry name" value="Trp_synth_b_CS"/>
</dbReference>
<dbReference type="InterPro" id="IPR006654">
    <property type="entry name" value="Trp_synth_beta"/>
</dbReference>
<dbReference type="InterPro" id="IPR023026">
    <property type="entry name" value="Trp_synth_beta/beta-like"/>
</dbReference>
<dbReference type="InterPro" id="IPR001926">
    <property type="entry name" value="TrpB-like_PALP"/>
</dbReference>
<dbReference type="InterPro" id="IPR036052">
    <property type="entry name" value="TrpB-like_PALP_sf"/>
</dbReference>
<dbReference type="NCBIfam" id="TIGR00263">
    <property type="entry name" value="trpB"/>
    <property type="match status" value="1"/>
</dbReference>
<dbReference type="PANTHER" id="PTHR48077:SF3">
    <property type="entry name" value="TRYPTOPHAN SYNTHASE"/>
    <property type="match status" value="1"/>
</dbReference>
<dbReference type="PANTHER" id="PTHR48077">
    <property type="entry name" value="TRYPTOPHAN SYNTHASE-RELATED"/>
    <property type="match status" value="1"/>
</dbReference>
<dbReference type="Pfam" id="PF00291">
    <property type="entry name" value="PALP"/>
    <property type="match status" value="1"/>
</dbReference>
<dbReference type="PIRSF" id="PIRSF001413">
    <property type="entry name" value="Trp_syn_beta"/>
    <property type="match status" value="1"/>
</dbReference>
<dbReference type="SUPFAM" id="SSF53686">
    <property type="entry name" value="Tryptophan synthase beta subunit-like PLP-dependent enzymes"/>
    <property type="match status" value="1"/>
</dbReference>
<dbReference type="PROSITE" id="PS00168">
    <property type="entry name" value="TRP_SYNTHASE_BETA"/>
    <property type="match status" value="1"/>
</dbReference>
<accession>B1I7S7</accession>
<proteinExistence type="inferred from homology"/>
<gene>
    <name evidence="1" type="primary">trpB</name>
    <name type="ordered locus">SPH_1934</name>
</gene>
<protein>
    <recommendedName>
        <fullName evidence="1">Tryptophan synthase beta chain</fullName>
        <ecNumber evidence="1">4.2.1.20</ecNumber>
    </recommendedName>
</protein>
<organism>
    <name type="scientific">Streptococcus pneumoniae (strain Hungary19A-6)</name>
    <dbReference type="NCBI Taxonomy" id="487214"/>
    <lineage>
        <taxon>Bacteria</taxon>
        <taxon>Bacillati</taxon>
        <taxon>Bacillota</taxon>
        <taxon>Bacilli</taxon>
        <taxon>Lactobacillales</taxon>
        <taxon>Streptococcaceae</taxon>
        <taxon>Streptococcus</taxon>
    </lineage>
</organism>
<keyword id="KW-0028">Amino-acid biosynthesis</keyword>
<keyword id="KW-0057">Aromatic amino acid biosynthesis</keyword>
<keyword id="KW-0456">Lyase</keyword>
<keyword id="KW-0663">Pyridoxal phosphate</keyword>
<keyword id="KW-0822">Tryptophan biosynthesis</keyword>
<reference key="1">
    <citation type="journal article" date="2010" name="Genome Biol.">
        <title>Structure and dynamics of the pan-genome of Streptococcus pneumoniae and closely related species.</title>
        <authorList>
            <person name="Donati C."/>
            <person name="Hiller N.L."/>
            <person name="Tettelin H."/>
            <person name="Muzzi A."/>
            <person name="Croucher N.J."/>
            <person name="Angiuoli S.V."/>
            <person name="Oggioni M."/>
            <person name="Dunning Hotopp J.C."/>
            <person name="Hu F.Z."/>
            <person name="Riley D.R."/>
            <person name="Covacci A."/>
            <person name="Mitchell T.J."/>
            <person name="Bentley S.D."/>
            <person name="Kilian M."/>
            <person name="Ehrlich G.D."/>
            <person name="Rappuoli R."/>
            <person name="Moxon E.R."/>
            <person name="Masignani V."/>
        </authorList>
    </citation>
    <scope>NUCLEOTIDE SEQUENCE [LARGE SCALE GENOMIC DNA]</scope>
    <source>
        <strain>Hungary19A-6</strain>
    </source>
</reference>
<evidence type="ECO:0000255" key="1">
    <source>
        <dbReference type="HAMAP-Rule" id="MF_00133"/>
    </source>
</evidence>
<feature type="chain" id="PRO_1000095829" description="Tryptophan synthase beta chain">
    <location>
        <begin position="1"/>
        <end position="407"/>
    </location>
</feature>
<feature type="modified residue" description="N6-(pyridoxal phosphate)lysine" evidence="1">
    <location>
        <position position="91"/>
    </location>
</feature>
<sequence length="407" mass="44264">MAYQEPNKDGFYGKFGGRFVPETLMTAVLELEKAYRESQADPSFQEELNQLLRQYVGRETPLYYAKNLTQHIGGAKIYLKREDLNHTGAHKINNALGQVWLAKRMGKKKIIAETGAGQHGVATATAAALFNMECTIYMGEEDVKRQALNVFRMELLGAKVEAVTDGSRVLKDAVNAALRSWVANIDDTHYILGSALGPHPFPEIVRDFQSVIGREAKQQYRDMTGQNLPDALVACVGGGSNAIGLFHPFVEDESVAMYGTEAAGLGVDTEHHAATLTKGRPGVLHGSLMDVLQDAHGQILEAFSISAGLDYPGIGPEHSHYHDIKRASYVPVTDEEALEGFQLLSRVEGIIPALESSHAIAFAVKLAKELGPEKSMIVCLSGRGDKDVVQVKDRLEADAAKKGEAHA</sequence>
<name>TRPB_STRPI</name>